<organism>
    <name type="scientific">Shewanella sp. (strain ANA-3)</name>
    <dbReference type="NCBI Taxonomy" id="94122"/>
    <lineage>
        <taxon>Bacteria</taxon>
        <taxon>Pseudomonadati</taxon>
        <taxon>Pseudomonadota</taxon>
        <taxon>Gammaproteobacteria</taxon>
        <taxon>Alteromonadales</taxon>
        <taxon>Shewanellaceae</taxon>
        <taxon>Shewanella</taxon>
    </lineage>
</organism>
<protein>
    <recommendedName>
        <fullName evidence="1">Ribosomal RNA small subunit methyltransferase G</fullName>
        <ecNumber evidence="1">2.1.1.170</ecNumber>
    </recommendedName>
    <alternativeName>
        <fullName evidence="1">16S rRNA 7-methylguanosine methyltransferase</fullName>
        <shortName evidence="1">16S rRNA m7G methyltransferase</shortName>
    </alternativeName>
</protein>
<feature type="chain" id="PRO_1000010203" description="Ribosomal RNA small subunit methyltransferase G">
    <location>
        <begin position="1"/>
        <end position="206"/>
    </location>
</feature>
<feature type="binding site" evidence="1">
    <location>
        <position position="74"/>
    </location>
    <ligand>
        <name>S-adenosyl-L-methionine</name>
        <dbReference type="ChEBI" id="CHEBI:59789"/>
    </ligand>
</feature>
<feature type="binding site" evidence="1">
    <location>
        <position position="79"/>
    </location>
    <ligand>
        <name>S-adenosyl-L-methionine</name>
        <dbReference type="ChEBI" id="CHEBI:59789"/>
    </ligand>
</feature>
<feature type="binding site" evidence="1">
    <location>
        <begin position="125"/>
        <end position="126"/>
    </location>
    <ligand>
        <name>S-adenosyl-L-methionine</name>
        <dbReference type="ChEBI" id="CHEBI:59789"/>
    </ligand>
</feature>
<feature type="binding site" evidence="1">
    <location>
        <position position="140"/>
    </location>
    <ligand>
        <name>S-adenosyl-L-methionine</name>
        <dbReference type="ChEBI" id="CHEBI:59789"/>
    </ligand>
</feature>
<comment type="function">
    <text evidence="1">Specifically methylates the N7 position of guanine in position 527 of 16S rRNA.</text>
</comment>
<comment type="catalytic activity">
    <reaction evidence="1">
        <text>guanosine(527) in 16S rRNA + S-adenosyl-L-methionine = N(7)-methylguanosine(527) in 16S rRNA + S-adenosyl-L-homocysteine</text>
        <dbReference type="Rhea" id="RHEA:42732"/>
        <dbReference type="Rhea" id="RHEA-COMP:10209"/>
        <dbReference type="Rhea" id="RHEA-COMP:10210"/>
        <dbReference type="ChEBI" id="CHEBI:57856"/>
        <dbReference type="ChEBI" id="CHEBI:59789"/>
        <dbReference type="ChEBI" id="CHEBI:74269"/>
        <dbReference type="ChEBI" id="CHEBI:74480"/>
        <dbReference type="EC" id="2.1.1.170"/>
    </reaction>
</comment>
<comment type="subcellular location">
    <subcellularLocation>
        <location evidence="1">Cytoplasm</location>
    </subcellularLocation>
</comment>
<comment type="similarity">
    <text evidence="1">Belongs to the methyltransferase superfamily. RNA methyltransferase RsmG family.</text>
</comment>
<name>RSMG_SHESA</name>
<reference key="1">
    <citation type="submission" date="2006-09" db="EMBL/GenBank/DDBJ databases">
        <title>Complete sequence of chromosome 1 of Shewanella sp. ANA-3.</title>
        <authorList>
            <person name="Copeland A."/>
            <person name="Lucas S."/>
            <person name="Lapidus A."/>
            <person name="Barry K."/>
            <person name="Detter J.C."/>
            <person name="Glavina del Rio T."/>
            <person name="Hammon N."/>
            <person name="Israni S."/>
            <person name="Dalin E."/>
            <person name="Tice H."/>
            <person name="Pitluck S."/>
            <person name="Chertkov O."/>
            <person name="Brettin T."/>
            <person name="Bruce D."/>
            <person name="Han C."/>
            <person name="Tapia R."/>
            <person name="Gilna P."/>
            <person name="Schmutz J."/>
            <person name="Larimer F."/>
            <person name="Land M."/>
            <person name="Hauser L."/>
            <person name="Kyrpides N."/>
            <person name="Kim E."/>
            <person name="Newman D."/>
            <person name="Salticov C."/>
            <person name="Konstantinidis K."/>
            <person name="Klappenback J."/>
            <person name="Tiedje J."/>
            <person name="Richardson P."/>
        </authorList>
    </citation>
    <scope>NUCLEOTIDE SEQUENCE [LARGE SCALE GENOMIC DNA]</scope>
    <source>
        <strain>ANA-3</strain>
    </source>
</reference>
<sequence>MLSAQLEAYLAEINLPATAEQKKQLLDFVGMLNKWNKAYNLTSVRDPEAMLVRHIMDSLVVSPHLQGERFIDVGTGPGLPGIPLAIMNPDKTFVLLDSLGKRIRFQKQVAFELGIHNISSIESRVEAYQPEQKFDGVLSRAFASIHDMLTWCHHLPAEHGQFYALKGLLSDEEMQQIPAGFVVTETIELQVPRLDEQRHLLKIIKE</sequence>
<gene>
    <name evidence="1" type="primary">rsmG</name>
    <name type="ordered locus">Shewana3_0001</name>
</gene>
<keyword id="KW-0963">Cytoplasm</keyword>
<keyword id="KW-0489">Methyltransferase</keyword>
<keyword id="KW-0698">rRNA processing</keyword>
<keyword id="KW-0949">S-adenosyl-L-methionine</keyword>
<keyword id="KW-0808">Transferase</keyword>
<accession>A0KR27</accession>
<proteinExistence type="inferred from homology"/>
<evidence type="ECO:0000255" key="1">
    <source>
        <dbReference type="HAMAP-Rule" id="MF_00074"/>
    </source>
</evidence>
<dbReference type="EC" id="2.1.1.170" evidence="1"/>
<dbReference type="EMBL" id="CP000469">
    <property type="protein sequence ID" value="ABK46246.1"/>
    <property type="molecule type" value="Genomic_DNA"/>
</dbReference>
<dbReference type="RefSeq" id="WP_011715298.1">
    <property type="nucleotide sequence ID" value="NC_008577.1"/>
</dbReference>
<dbReference type="SMR" id="A0KR27"/>
<dbReference type="STRING" id="94122.Shewana3_0001"/>
<dbReference type="KEGG" id="shn:Shewana3_0001"/>
<dbReference type="eggNOG" id="COG0357">
    <property type="taxonomic scope" value="Bacteria"/>
</dbReference>
<dbReference type="HOGENOM" id="CLU_065341_2_0_6"/>
<dbReference type="OrthoDB" id="9808773at2"/>
<dbReference type="Proteomes" id="UP000002589">
    <property type="component" value="Chromosome"/>
</dbReference>
<dbReference type="GO" id="GO:0005829">
    <property type="term" value="C:cytosol"/>
    <property type="evidence" value="ECO:0007669"/>
    <property type="project" value="TreeGrafter"/>
</dbReference>
<dbReference type="GO" id="GO:0070043">
    <property type="term" value="F:rRNA (guanine-N7-)-methyltransferase activity"/>
    <property type="evidence" value="ECO:0007669"/>
    <property type="project" value="UniProtKB-UniRule"/>
</dbReference>
<dbReference type="CDD" id="cd02440">
    <property type="entry name" value="AdoMet_MTases"/>
    <property type="match status" value="1"/>
</dbReference>
<dbReference type="FunFam" id="3.40.50.150:FF:000032">
    <property type="entry name" value="Ribosomal RNA small subunit methyltransferase G"/>
    <property type="match status" value="1"/>
</dbReference>
<dbReference type="Gene3D" id="3.40.50.150">
    <property type="entry name" value="Vaccinia Virus protein VP39"/>
    <property type="match status" value="1"/>
</dbReference>
<dbReference type="HAMAP" id="MF_00074">
    <property type="entry name" value="16SrRNA_methyltr_G"/>
    <property type="match status" value="1"/>
</dbReference>
<dbReference type="InterPro" id="IPR003682">
    <property type="entry name" value="rRNA_ssu_MeTfrase_G"/>
</dbReference>
<dbReference type="InterPro" id="IPR029063">
    <property type="entry name" value="SAM-dependent_MTases_sf"/>
</dbReference>
<dbReference type="NCBIfam" id="TIGR00138">
    <property type="entry name" value="rsmG_gidB"/>
    <property type="match status" value="1"/>
</dbReference>
<dbReference type="PANTHER" id="PTHR31760">
    <property type="entry name" value="S-ADENOSYL-L-METHIONINE-DEPENDENT METHYLTRANSFERASES SUPERFAMILY PROTEIN"/>
    <property type="match status" value="1"/>
</dbReference>
<dbReference type="PANTHER" id="PTHR31760:SF0">
    <property type="entry name" value="S-ADENOSYL-L-METHIONINE-DEPENDENT METHYLTRANSFERASES SUPERFAMILY PROTEIN"/>
    <property type="match status" value="1"/>
</dbReference>
<dbReference type="Pfam" id="PF02527">
    <property type="entry name" value="GidB"/>
    <property type="match status" value="1"/>
</dbReference>
<dbReference type="PIRSF" id="PIRSF003078">
    <property type="entry name" value="GidB"/>
    <property type="match status" value="1"/>
</dbReference>
<dbReference type="SUPFAM" id="SSF53335">
    <property type="entry name" value="S-adenosyl-L-methionine-dependent methyltransferases"/>
    <property type="match status" value="1"/>
</dbReference>